<keyword id="KW-0030">Aminoacyl-tRNA synthetase</keyword>
<keyword id="KW-0067">ATP-binding</keyword>
<keyword id="KW-0963">Cytoplasm</keyword>
<keyword id="KW-0436">Ligase</keyword>
<keyword id="KW-0547">Nucleotide-binding</keyword>
<keyword id="KW-0648">Protein biosynthesis</keyword>
<keyword id="KW-1185">Reference proteome</keyword>
<gene>
    <name evidence="1" type="primary">glyS</name>
    <name type="ordered locus">NMB1930</name>
</gene>
<dbReference type="EC" id="6.1.1.14" evidence="1"/>
<dbReference type="EMBL" id="AE002098">
    <property type="protein sequence ID" value="AAF42259.1"/>
    <property type="molecule type" value="Genomic_DNA"/>
</dbReference>
<dbReference type="PIR" id="E81027">
    <property type="entry name" value="E81027"/>
</dbReference>
<dbReference type="RefSeq" id="NP_274924.1">
    <property type="nucleotide sequence ID" value="NC_003112.2"/>
</dbReference>
<dbReference type="RefSeq" id="WP_002244319.1">
    <property type="nucleotide sequence ID" value="NC_003112.2"/>
</dbReference>
<dbReference type="SMR" id="Q9JXQ5"/>
<dbReference type="FunCoup" id="Q9JXQ5">
    <property type="interactions" value="509"/>
</dbReference>
<dbReference type="STRING" id="122586.NMB1930"/>
<dbReference type="PaxDb" id="122586-NMB1930"/>
<dbReference type="KEGG" id="nme:NMB1930"/>
<dbReference type="PATRIC" id="fig|122586.8.peg.2458"/>
<dbReference type="HOGENOM" id="CLU_007220_2_2_4"/>
<dbReference type="InParanoid" id="Q9JXQ5"/>
<dbReference type="OrthoDB" id="9775440at2"/>
<dbReference type="Proteomes" id="UP000000425">
    <property type="component" value="Chromosome"/>
</dbReference>
<dbReference type="GO" id="GO:0005829">
    <property type="term" value="C:cytosol"/>
    <property type="evidence" value="ECO:0000318"/>
    <property type="project" value="GO_Central"/>
</dbReference>
<dbReference type="GO" id="GO:0004814">
    <property type="term" value="F:arginine-tRNA ligase activity"/>
    <property type="evidence" value="ECO:0007669"/>
    <property type="project" value="InterPro"/>
</dbReference>
<dbReference type="GO" id="GO:0005524">
    <property type="term" value="F:ATP binding"/>
    <property type="evidence" value="ECO:0007669"/>
    <property type="project" value="UniProtKB-UniRule"/>
</dbReference>
<dbReference type="GO" id="GO:0004820">
    <property type="term" value="F:glycine-tRNA ligase activity"/>
    <property type="evidence" value="ECO:0007669"/>
    <property type="project" value="UniProtKB-UniRule"/>
</dbReference>
<dbReference type="GO" id="GO:0006420">
    <property type="term" value="P:arginyl-tRNA aminoacylation"/>
    <property type="evidence" value="ECO:0007669"/>
    <property type="project" value="InterPro"/>
</dbReference>
<dbReference type="GO" id="GO:0006426">
    <property type="term" value="P:glycyl-tRNA aminoacylation"/>
    <property type="evidence" value="ECO:0007669"/>
    <property type="project" value="UniProtKB-UniRule"/>
</dbReference>
<dbReference type="HAMAP" id="MF_00255">
    <property type="entry name" value="Gly_tRNA_synth_beta"/>
    <property type="match status" value="1"/>
</dbReference>
<dbReference type="InterPro" id="IPR008909">
    <property type="entry name" value="DALR_anticod-bd"/>
</dbReference>
<dbReference type="InterPro" id="IPR015944">
    <property type="entry name" value="Gly-tRNA-synth_bsu"/>
</dbReference>
<dbReference type="InterPro" id="IPR006194">
    <property type="entry name" value="Gly-tRNA-synth_heterodimer"/>
</dbReference>
<dbReference type="NCBIfam" id="TIGR00211">
    <property type="entry name" value="glyS"/>
    <property type="match status" value="1"/>
</dbReference>
<dbReference type="PANTHER" id="PTHR30075:SF2">
    <property type="entry name" value="GLYCINE--TRNA LIGASE, CHLOROPLASTIC_MITOCHONDRIAL 2"/>
    <property type="match status" value="1"/>
</dbReference>
<dbReference type="PANTHER" id="PTHR30075">
    <property type="entry name" value="GLYCYL-TRNA SYNTHETASE"/>
    <property type="match status" value="1"/>
</dbReference>
<dbReference type="Pfam" id="PF05746">
    <property type="entry name" value="DALR_1"/>
    <property type="match status" value="1"/>
</dbReference>
<dbReference type="Pfam" id="PF02092">
    <property type="entry name" value="tRNA_synt_2f"/>
    <property type="match status" value="1"/>
</dbReference>
<dbReference type="PRINTS" id="PR01045">
    <property type="entry name" value="TRNASYNTHGB"/>
</dbReference>
<dbReference type="SUPFAM" id="SSF109604">
    <property type="entry name" value="HD-domain/PDEase-like"/>
    <property type="match status" value="1"/>
</dbReference>
<dbReference type="PROSITE" id="PS50861">
    <property type="entry name" value="AA_TRNA_LIGASE_II_GLYAB"/>
    <property type="match status" value="1"/>
</dbReference>
<organism>
    <name type="scientific">Neisseria meningitidis serogroup B (strain ATCC BAA-335 / MC58)</name>
    <dbReference type="NCBI Taxonomy" id="122586"/>
    <lineage>
        <taxon>Bacteria</taxon>
        <taxon>Pseudomonadati</taxon>
        <taxon>Pseudomonadota</taxon>
        <taxon>Betaproteobacteria</taxon>
        <taxon>Neisseriales</taxon>
        <taxon>Neisseriaceae</taxon>
        <taxon>Neisseria</taxon>
    </lineage>
</organism>
<reference key="1">
    <citation type="journal article" date="2000" name="Science">
        <title>Complete genome sequence of Neisseria meningitidis serogroup B strain MC58.</title>
        <authorList>
            <person name="Tettelin H."/>
            <person name="Saunders N.J."/>
            <person name="Heidelberg J.F."/>
            <person name="Jeffries A.C."/>
            <person name="Nelson K.E."/>
            <person name="Eisen J.A."/>
            <person name="Ketchum K.A."/>
            <person name="Hood D.W."/>
            <person name="Peden J.F."/>
            <person name="Dodson R.J."/>
            <person name="Nelson W.C."/>
            <person name="Gwinn M.L."/>
            <person name="DeBoy R.T."/>
            <person name="Peterson J.D."/>
            <person name="Hickey E.K."/>
            <person name="Haft D.H."/>
            <person name="Salzberg S.L."/>
            <person name="White O."/>
            <person name="Fleischmann R.D."/>
            <person name="Dougherty B.A."/>
            <person name="Mason T.M."/>
            <person name="Ciecko A."/>
            <person name="Parksey D.S."/>
            <person name="Blair E."/>
            <person name="Cittone H."/>
            <person name="Clark E.B."/>
            <person name="Cotton M.D."/>
            <person name="Utterback T.R."/>
            <person name="Khouri H.M."/>
            <person name="Qin H."/>
            <person name="Vamathevan J.J."/>
            <person name="Gill J."/>
            <person name="Scarlato V."/>
            <person name="Masignani V."/>
            <person name="Pizza M."/>
            <person name="Grandi G."/>
            <person name="Sun L."/>
            <person name="Smith H.O."/>
            <person name="Fraser C.M."/>
            <person name="Moxon E.R."/>
            <person name="Rappuoli R."/>
            <person name="Venter J.C."/>
        </authorList>
    </citation>
    <scope>NUCLEOTIDE SEQUENCE [LARGE SCALE GENOMIC DNA]</scope>
    <source>
        <strain>ATCC BAA-335 / MC58</strain>
    </source>
</reference>
<accession>Q9JXQ5</accession>
<comment type="catalytic activity">
    <reaction evidence="1">
        <text>tRNA(Gly) + glycine + ATP = glycyl-tRNA(Gly) + AMP + diphosphate</text>
        <dbReference type="Rhea" id="RHEA:16013"/>
        <dbReference type="Rhea" id="RHEA-COMP:9664"/>
        <dbReference type="Rhea" id="RHEA-COMP:9683"/>
        <dbReference type="ChEBI" id="CHEBI:30616"/>
        <dbReference type="ChEBI" id="CHEBI:33019"/>
        <dbReference type="ChEBI" id="CHEBI:57305"/>
        <dbReference type="ChEBI" id="CHEBI:78442"/>
        <dbReference type="ChEBI" id="CHEBI:78522"/>
        <dbReference type="ChEBI" id="CHEBI:456215"/>
        <dbReference type="EC" id="6.1.1.14"/>
    </reaction>
</comment>
<comment type="subunit">
    <text evidence="1">Tetramer of two alpha and two beta subunits.</text>
</comment>
<comment type="subcellular location">
    <subcellularLocation>
        <location evidence="1">Cytoplasm</location>
    </subcellularLocation>
</comment>
<comment type="similarity">
    <text evidence="1">Belongs to the class-II aminoacyl-tRNA synthetase family.</text>
</comment>
<protein>
    <recommendedName>
        <fullName evidence="1">Glycine--tRNA ligase beta subunit</fullName>
        <ecNumber evidence="1">6.1.1.14</ecNumber>
    </recommendedName>
    <alternativeName>
        <fullName evidence="1">Glycyl-tRNA synthetase beta subunit</fullName>
        <shortName evidence="1">GlyRS</shortName>
    </alternativeName>
</protein>
<sequence length="687" mass="74573">MMTQTLLIELLTEELPPKALNNLGNHFAASVAEGLEKAQLVDGAAEFTAYASPRRLAVQVKNVKAVQADQKIVKKGPAVANAMKDGAPTKALEGFARGAGAKIEDLTIVHDGKQDVYAYEYVQIGKPLGGLLEDIINQAVKKLPIPKVMRWGSSTFTFVRPVHGLVVLHGGDIVNVSVLGLQSGNKTLGHRFLSDGEITIENADSYAAQMREQGKVVASFAERKAAIQTVLEGQARRLNATAAADEALLDEVTALVEWPVVLEAGFEEHFLAVPQECLILTMQQNQKYFPLLDQNGKLMNRFLLVSNLQTEDPSHIIQGNERVLRARLSDAEFFYKQDQKATLESRLPKLTNVVYHNKIGSQAERIERLQSIAAHIAKALGADAAAAERAARLAKADLVTEMVGEFPELQGTMGKYYARLDGETEEITEAVEQHYQPRFAGDNLPEGKIAAAVALADKLETLVGIWGIGLIPTGDKDPYALRRAALGILRMLMQYGLDVNELIQTAFNSFPQGLLNEKTPSETADFMQARLAVLLQNDYPQDIVAAVLAKQPRRLDDLTAKLQAVAAFKQLPEAAALAAANKRVQNLLKKADAELGAVNESLLQQDEEKALFAAAQGLQPKIAAAVAEGNFQTALSELASVKPQVDAFFDGVMVMAEDAAVKQNRLNLLNRLAEQMNAVADIALLGE</sequence>
<evidence type="ECO:0000255" key="1">
    <source>
        <dbReference type="HAMAP-Rule" id="MF_00255"/>
    </source>
</evidence>
<name>SYGB_NEIMB</name>
<feature type="chain" id="PRO_0000072916" description="Glycine--tRNA ligase beta subunit">
    <location>
        <begin position="1"/>
        <end position="687"/>
    </location>
</feature>
<proteinExistence type="inferred from homology"/>